<accession>B2SR11</accession>
<feature type="chain" id="PRO_1000190868" description="Acyl-[acyl-carrier-protein]--UDP-N-acetylglucosamine O-acyltransferase">
    <location>
        <begin position="1"/>
        <end position="263"/>
    </location>
</feature>
<keyword id="KW-0012">Acyltransferase</keyword>
<keyword id="KW-0963">Cytoplasm</keyword>
<keyword id="KW-0441">Lipid A biosynthesis</keyword>
<keyword id="KW-0444">Lipid biosynthesis</keyword>
<keyword id="KW-0443">Lipid metabolism</keyword>
<keyword id="KW-0677">Repeat</keyword>
<keyword id="KW-0808">Transferase</keyword>
<organism>
    <name type="scientific">Xanthomonas oryzae pv. oryzae (strain PXO99A)</name>
    <dbReference type="NCBI Taxonomy" id="360094"/>
    <lineage>
        <taxon>Bacteria</taxon>
        <taxon>Pseudomonadati</taxon>
        <taxon>Pseudomonadota</taxon>
        <taxon>Gammaproteobacteria</taxon>
        <taxon>Lysobacterales</taxon>
        <taxon>Lysobacteraceae</taxon>
        <taxon>Xanthomonas</taxon>
    </lineage>
</organism>
<reference key="1">
    <citation type="journal article" date="2008" name="BMC Genomics">
        <title>Genome sequence and rapid evolution of the rice pathogen Xanthomonas oryzae pv. oryzae PXO99A.</title>
        <authorList>
            <person name="Salzberg S.L."/>
            <person name="Sommer D.D."/>
            <person name="Schatz M.C."/>
            <person name="Phillippy A.M."/>
            <person name="Rabinowicz P.D."/>
            <person name="Tsuge S."/>
            <person name="Furutani A."/>
            <person name="Ochiai H."/>
            <person name="Delcher A.L."/>
            <person name="Kelley D."/>
            <person name="Madupu R."/>
            <person name="Puiu D."/>
            <person name="Radune D."/>
            <person name="Shumway M."/>
            <person name="Trapnell C."/>
            <person name="Aparna G."/>
            <person name="Jha G."/>
            <person name="Pandey A."/>
            <person name="Patil P.B."/>
            <person name="Ishihara H."/>
            <person name="Meyer D.F."/>
            <person name="Szurek B."/>
            <person name="Verdier V."/>
            <person name="Koebnik R."/>
            <person name="Dow J.M."/>
            <person name="Ryan R.P."/>
            <person name="Hirata H."/>
            <person name="Tsuyumu S."/>
            <person name="Won Lee S."/>
            <person name="Seo Y.-S."/>
            <person name="Sriariyanum M."/>
            <person name="Ronald P.C."/>
            <person name="Sonti R.V."/>
            <person name="Van Sluys M.-A."/>
            <person name="Leach J.E."/>
            <person name="White F.F."/>
            <person name="Bogdanove A.J."/>
        </authorList>
    </citation>
    <scope>NUCLEOTIDE SEQUENCE [LARGE SCALE GENOMIC DNA]</scope>
    <source>
        <strain>PXO99A</strain>
    </source>
</reference>
<evidence type="ECO:0000255" key="1">
    <source>
        <dbReference type="HAMAP-Rule" id="MF_00387"/>
    </source>
</evidence>
<sequence length="263" mass="28132">MRDQAPLIHPTAVIDPSAQLASDVRVGAFSLIGADVHIGAGTEVGPHCSIHGPTRIGRNNRFIGHAAIGGEPQDKKYAGERTELVIGDDNVIREFVTINRGTRGGGGITTVGNDNWMLAYTHVAHDCHVGNHCVFSNNTTLAGHVTVGDYVIISGFAGAHQFCRIGAHAFLGMGALTNGDVPPFTMVGRESLGRPRGINSEGLKRRGFDAERITAIKRAYRTLYVAGLPLTDAKLQLAEQAKSSDDVRGMLEFIEAAERSLLR</sequence>
<comment type="function">
    <text evidence="1">Involved in the biosynthesis of lipid A, a phosphorylated glycolipid that anchors the lipopolysaccharide to the outer membrane of the cell.</text>
</comment>
<comment type="catalytic activity">
    <reaction evidence="1">
        <text>a (3R)-hydroxyacyl-[ACP] + UDP-N-acetyl-alpha-D-glucosamine = a UDP-3-O-[(3R)-3-hydroxyacyl]-N-acetyl-alpha-D-glucosamine + holo-[ACP]</text>
        <dbReference type="Rhea" id="RHEA:67812"/>
        <dbReference type="Rhea" id="RHEA-COMP:9685"/>
        <dbReference type="Rhea" id="RHEA-COMP:9945"/>
        <dbReference type="ChEBI" id="CHEBI:57705"/>
        <dbReference type="ChEBI" id="CHEBI:64479"/>
        <dbReference type="ChEBI" id="CHEBI:78827"/>
        <dbReference type="ChEBI" id="CHEBI:173225"/>
        <dbReference type="EC" id="2.3.1.129"/>
    </reaction>
</comment>
<comment type="pathway">
    <text evidence="1">Glycolipid biosynthesis; lipid IV(A) biosynthesis; lipid IV(A) from (3R)-3-hydroxytetradecanoyl-[acyl-carrier-protein] and UDP-N-acetyl-alpha-D-glucosamine: step 1/6.</text>
</comment>
<comment type="subunit">
    <text evidence="1">Homotrimer.</text>
</comment>
<comment type="subcellular location">
    <subcellularLocation>
        <location evidence="1">Cytoplasm</location>
    </subcellularLocation>
</comment>
<comment type="similarity">
    <text evidence="1">Belongs to the transferase hexapeptide repeat family. LpxA subfamily.</text>
</comment>
<dbReference type="EC" id="2.3.1.129" evidence="1"/>
<dbReference type="EMBL" id="CP000967">
    <property type="protein sequence ID" value="ACD59572.1"/>
    <property type="molecule type" value="Genomic_DNA"/>
</dbReference>
<dbReference type="RefSeq" id="WP_011258689.1">
    <property type="nucleotide sequence ID" value="NC_010717.2"/>
</dbReference>
<dbReference type="SMR" id="B2SR11"/>
<dbReference type="KEGG" id="xop:PXO_01117"/>
<dbReference type="eggNOG" id="COG1043">
    <property type="taxonomic scope" value="Bacteria"/>
</dbReference>
<dbReference type="HOGENOM" id="CLU_061249_0_0_6"/>
<dbReference type="UniPathway" id="UPA00359">
    <property type="reaction ID" value="UER00477"/>
</dbReference>
<dbReference type="Proteomes" id="UP000001740">
    <property type="component" value="Chromosome"/>
</dbReference>
<dbReference type="GO" id="GO:0005737">
    <property type="term" value="C:cytoplasm"/>
    <property type="evidence" value="ECO:0007669"/>
    <property type="project" value="UniProtKB-SubCell"/>
</dbReference>
<dbReference type="GO" id="GO:0016020">
    <property type="term" value="C:membrane"/>
    <property type="evidence" value="ECO:0007669"/>
    <property type="project" value="GOC"/>
</dbReference>
<dbReference type="GO" id="GO:0008780">
    <property type="term" value="F:acyl-[acyl-carrier-protein]-UDP-N-acetylglucosamine O-acyltransferase activity"/>
    <property type="evidence" value="ECO:0007669"/>
    <property type="project" value="UniProtKB-UniRule"/>
</dbReference>
<dbReference type="GO" id="GO:0009245">
    <property type="term" value="P:lipid A biosynthetic process"/>
    <property type="evidence" value="ECO:0007669"/>
    <property type="project" value="UniProtKB-UniRule"/>
</dbReference>
<dbReference type="CDD" id="cd03351">
    <property type="entry name" value="LbH_UDP-GlcNAc_AT"/>
    <property type="match status" value="1"/>
</dbReference>
<dbReference type="Gene3D" id="2.160.10.10">
    <property type="entry name" value="Hexapeptide repeat proteins"/>
    <property type="match status" value="1"/>
</dbReference>
<dbReference type="Gene3D" id="1.20.1180.10">
    <property type="entry name" value="Udp N-acetylglucosamine O-acyltransferase, C-terminal domain"/>
    <property type="match status" value="1"/>
</dbReference>
<dbReference type="HAMAP" id="MF_00387">
    <property type="entry name" value="LpxA"/>
    <property type="match status" value="1"/>
</dbReference>
<dbReference type="InterPro" id="IPR029098">
    <property type="entry name" value="Acetyltransf_C"/>
</dbReference>
<dbReference type="InterPro" id="IPR037157">
    <property type="entry name" value="Acetyltransf_C_sf"/>
</dbReference>
<dbReference type="InterPro" id="IPR001451">
    <property type="entry name" value="Hexapep"/>
</dbReference>
<dbReference type="InterPro" id="IPR010137">
    <property type="entry name" value="Lipid_A_LpxA"/>
</dbReference>
<dbReference type="InterPro" id="IPR011004">
    <property type="entry name" value="Trimer_LpxA-like_sf"/>
</dbReference>
<dbReference type="NCBIfam" id="TIGR01852">
    <property type="entry name" value="lipid_A_lpxA"/>
    <property type="match status" value="1"/>
</dbReference>
<dbReference type="NCBIfam" id="NF003657">
    <property type="entry name" value="PRK05289.1"/>
    <property type="match status" value="1"/>
</dbReference>
<dbReference type="PANTHER" id="PTHR43480">
    <property type="entry name" value="ACYL-[ACYL-CARRIER-PROTEIN]--UDP-N-ACETYLGLUCOSAMINE O-ACYLTRANSFERASE"/>
    <property type="match status" value="1"/>
</dbReference>
<dbReference type="PANTHER" id="PTHR43480:SF1">
    <property type="entry name" value="ACYL-[ACYL-CARRIER-PROTEIN]--UDP-N-ACETYLGLUCOSAMINE O-ACYLTRANSFERASE, MITOCHONDRIAL-RELATED"/>
    <property type="match status" value="1"/>
</dbReference>
<dbReference type="Pfam" id="PF13720">
    <property type="entry name" value="Acetyltransf_11"/>
    <property type="match status" value="1"/>
</dbReference>
<dbReference type="Pfam" id="PF00132">
    <property type="entry name" value="Hexapep"/>
    <property type="match status" value="1"/>
</dbReference>
<dbReference type="PIRSF" id="PIRSF000456">
    <property type="entry name" value="UDP-GlcNAc_acltr"/>
    <property type="match status" value="1"/>
</dbReference>
<dbReference type="SUPFAM" id="SSF51161">
    <property type="entry name" value="Trimeric LpxA-like enzymes"/>
    <property type="match status" value="1"/>
</dbReference>
<gene>
    <name evidence="1" type="primary">lpxA</name>
    <name type="ordered locus">PXO_01117</name>
</gene>
<name>LPXA_XANOP</name>
<protein>
    <recommendedName>
        <fullName evidence="1">Acyl-[acyl-carrier-protein]--UDP-N-acetylglucosamine O-acyltransferase</fullName>
        <shortName evidence="1">UDP-N-acetylglucosamine acyltransferase</shortName>
        <ecNumber evidence="1">2.3.1.129</ecNumber>
    </recommendedName>
</protein>
<proteinExistence type="inferred from homology"/>